<gene>
    <name type="primary">CFDP1</name>
</gene>
<reference key="1">
    <citation type="submission" date="2003-02" db="EMBL/GenBank/DDBJ databases">
        <title>Gene organization of the chevrotain bcnt whose paralogue in ruminantia includes an endonuclease domain of RTE-1 in the protein.</title>
        <authorList>
            <person name="Ueno S."/>
            <person name="Kimura J."/>
            <person name="Kurohmaru M."/>
            <person name="Fukuta K."/>
            <person name="Iwashita S."/>
        </authorList>
    </citation>
    <scope>NUCLEOTIDE SEQUENCE [GENOMIC DNA]</scope>
    <source>
        <tissue>Liver</tissue>
    </source>
</reference>
<reference key="2">
    <citation type="submission" date="2004-10" db="EMBL/GenBank/DDBJ databases">
        <title>The diversification of the paralogous Bcnt gene in ruminants was accompanied by the recruitment of an endonuclease domain from a retrotransposable element-1.</title>
        <authorList>
            <person name="Ueno S."/>
            <person name="Nakashima K."/>
            <person name="Osada N."/>
            <person name="Kubo Y."/>
            <person name="Ohshima K."/>
            <person name="Tanaka K."/>
            <person name="Endo H."/>
            <person name="Kimura J."/>
            <person name="Kurohmaru M."/>
            <person name="Fukuta K."/>
            <person name="David L."/>
            <person name="Iwashita S."/>
        </authorList>
    </citation>
    <scope>NUCLEOTIDE SEQUENCE [MRNA]</scope>
    <source>
        <tissue>Liver</tissue>
    </source>
</reference>
<protein>
    <recommendedName>
        <fullName>Craniofacial development protein 1</fullName>
    </recommendedName>
    <alternativeName>
        <fullName>Bucentaur</fullName>
    </alternativeName>
    <alternativeName>
        <fullName>h-type BCNT protein</fullName>
    </alternativeName>
</protein>
<evidence type="ECO:0000250" key="1"/>
<evidence type="ECO:0000250" key="2">
    <source>
        <dbReference type="UniProtKB" id="Q75UQ2"/>
    </source>
</evidence>
<evidence type="ECO:0000250" key="3">
    <source>
        <dbReference type="UniProtKB" id="Q9UEE9"/>
    </source>
</evidence>
<evidence type="ECO:0000255" key="4">
    <source>
        <dbReference type="PROSITE-ProRule" id="PRU00610"/>
    </source>
</evidence>
<evidence type="ECO:0000256" key="5">
    <source>
        <dbReference type="SAM" id="MobiDB-lite"/>
    </source>
</evidence>
<evidence type="ECO:0000305" key="6"/>
<name>CFDP1_TRAJA</name>
<proteinExistence type="evidence at transcript level"/>
<organism>
    <name type="scientific">Tragulus javanicus</name>
    <name type="common">Lesser Malay chevrotain</name>
    <name type="synonym">Lesser mouse deer</name>
    <dbReference type="NCBI Taxonomy" id="9849"/>
    <lineage>
        <taxon>Eukaryota</taxon>
        <taxon>Metazoa</taxon>
        <taxon>Chordata</taxon>
        <taxon>Craniata</taxon>
        <taxon>Vertebrata</taxon>
        <taxon>Euteleostomi</taxon>
        <taxon>Mammalia</taxon>
        <taxon>Eutheria</taxon>
        <taxon>Laurasiatheria</taxon>
        <taxon>Artiodactyla</taxon>
        <taxon>Ruminantia</taxon>
        <taxon>Tragulina</taxon>
        <taxon>Tragulidae</taxon>
        <taxon>Tragulus</taxon>
    </lineage>
</organism>
<feature type="chain" id="PRO_0000212498" description="Craniofacial development protein 1">
    <location>
        <begin position="1"/>
        <end position="298"/>
    </location>
</feature>
<feature type="domain" description="BCNT-C" evidence="4">
    <location>
        <begin position="217"/>
        <end position="298"/>
    </location>
</feature>
<feature type="region of interest" description="Disordered" evidence="5">
    <location>
        <begin position="1"/>
        <end position="159"/>
    </location>
</feature>
<feature type="region of interest" description="Hydrophilic">
    <location>
        <begin position="177"/>
        <end position="216"/>
    </location>
</feature>
<feature type="region of interest" description="Disordered" evidence="5">
    <location>
        <begin position="179"/>
        <end position="223"/>
    </location>
</feature>
<feature type="compositionally biased region" description="Acidic residues" evidence="5">
    <location>
        <begin position="1"/>
        <end position="18"/>
    </location>
</feature>
<feature type="compositionally biased region" description="Acidic residues" evidence="5">
    <location>
        <begin position="25"/>
        <end position="43"/>
    </location>
</feature>
<feature type="compositionally biased region" description="Basic residues" evidence="5">
    <location>
        <begin position="49"/>
        <end position="65"/>
    </location>
</feature>
<feature type="compositionally biased region" description="Acidic residues" evidence="5">
    <location>
        <begin position="87"/>
        <end position="102"/>
    </location>
</feature>
<feature type="compositionally biased region" description="Basic and acidic residues" evidence="5">
    <location>
        <begin position="103"/>
        <end position="112"/>
    </location>
</feature>
<feature type="compositionally biased region" description="Low complexity" evidence="5">
    <location>
        <begin position="124"/>
        <end position="134"/>
    </location>
</feature>
<feature type="compositionally biased region" description="Basic and acidic residues" evidence="5">
    <location>
        <begin position="149"/>
        <end position="159"/>
    </location>
</feature>
<feature type="compositionally biased region" description="Basic and acidic residues" evidence="5">
    <location>
        <begin position="179"/>
        <end position="200"/>
    </location>
</feature>
<feature type="modified residue" description="Phosphoserine" evidence="2">
    <location>
        <position position="82"/>
    </location>
</feature>
<feature type="modified residue" description="Phosphoserine" evidence="2">
    <location>
        <position position="85"/>
    </location>
</feature>
<feature type="modified residue" description="Phosphoserine" evidence="3">
    <location>
        <position position="116"/>
    </location>
</feature>
<feature type="modified residue" description="Phosphoserine" evidence="3">
    <location>
        <position position="215"/>
    </location>
</feature>
<feature type="modified residue" description="N6-methyllysine" evidence="3">
    <location>
        <position position="218"/>
    </location>
</feature>
<feature type="cross-link" description="Glycyl lysine isopeptide (Lys-Gly) (interchain with G-Cter in SUMO2)" evidence="3">
    <location>
        <position position="149"/>
    </location>
</feature>
<feature type="sequence conflict" description="In Ref. 1; BAD93709." evidence="6" ref="1">
    <original>T</original>
    <variation>A</variation>
    <location>
        <position position="92"/>
    </location>
</feature>
<feature type="sequence conflict" description="In Ref. 1; BAD93709." evidence="6" ref="1">
    <original>A</original>
    <variation>T</variation>
    <location>
        <position position="207"/>
    </location>
</feature>
<keyword id="KW-0137">Centromere</keyword>
<keyword id="KW-0158">Chromosome</keyword>
<keyword id="KW-0217">Developmental protein</keyword>
<keyword id="KW-1017">Isopeptide bond</keyword>
<keyword id="KW-0995">Kinetochore</keyword>
<keyword id="KW-0488">Methylation</keyword>
<keyword id="KW-0597">Phosphoprotein</keyword>
<keyword id="KW-0832">Ubl conjugation</keyword>
<sequence>MEEFDSEDFSTSEEDEDYVPSGGEYSEDDINELVKEDEVDVEEETHIIKGTKRKAERFMPRKRKQGGLSLEEEDEEDAGRESGGSGSEEEDTATEQEEGTESEDARKKKEDELWASFLNDVGPKSKVPPSTPVKTGEETEETSSSNLVKAEEQEKPKETEKVKITKVFDFAGEEVRVTKEVDPTSKEAKSFFKQSEKEKPQPNVPSAVSSLPAGSGLKRSSGMSSLLGKIGAKKQKMSTLEKSKLDWENFKEEEGIAEELAIHNRGKEGYIERKAFLDRVDHRQFEIERDLRLSKMKP</sequence>
<comment type="function">
    <text evidence="1">May play a role during embryogenesis.</text>
</comment>
<comment type="subcellular location">
    <subcellularLocation>
        <location evidence="3">Chromosome</location>
        <location evidence="3">Centromere</location>
        <location evidence="3">Kinetochore</location>
    </subcellularLocation>
</comment>
<comment type="miscellaneous">
    <text>Gene duplication of the ancestral BCNT gene leads to the h-type BCNT (CFDP1) gene and the p97BCNT (CFDP2) gene. The latter contains a region derived from the endonuclease domain of a retrotransposable element RTE-1. This repetitive sequence associated with the BCNT gene is specific to Ruminantia.</text>
</comment>
<dbReference type="EMBL" id="AB103377">
    <property type="protein sequence ID" value="BAC57061.1"/>
    <property type="molecule type" value="Genomic_DNA"/>
</dbReference>
<dbReference type="EMBL" id="AB192410">
    <property type="protein sequence ID" value="BAD93709.1"/>
    <property type="molecule type" value="Genomic_DNA"/>
</dbReference>
<dbReference type="EMBL" id="AB192411">
    <property type="protein sequence ID" value="BAD60811.1"/>
    <property type="molecule type" value="mRNA"/>
</dbReference>
<dbReference type="SMR" id="Q60FC2"/>
<dbReference type="GO" id="GO:0000776">
    <property type="term" value="C:kinetochore"/>
    <property type="evidence" value="ECO:0007669"/>
    <property type="project" value="UniProtKB-KW"/>
</dbReference>
<dbReference type="GO" id="GO:0000812">
    <property type="term" value="C:Swr1 complex"/>
    <property type="evidence" value="ECO:0007669"/>
    <property type="project" value="TreeGrafter"/>
</dbReference>
<dbReference type="InterPro" id="IPR011421">
    <property type="entry name" value="BCNT-C"/>
</dbReference>
<dbReference type="InterPro" id="IPR027124">
    <property type="entry name" value="Swc5/CFDP1/2"/>
</dbReference>
<dbReference type="PANTHER" id="PTHR48407">
    <property type="entry name" value="CRANIOFACIAL DEVELOPMENT PROTEIN 1"/>
    <property type="match status" value="1"/>
</dbReference>
<dbReference type="PANTHER" id="PTHR48407:SF1">
    <property type="entry name" value="CRANIOFACIAL DEVELOPMENT PROTEIN 1"/>
    <property type="match status" value="1"/>
</dbReference>
<dbReference type="Pfam" id="PF07572">
    <property type="entry name" value="BCNT"/>
    <property type="match status" value="1"/>
</dbReference>
<dbReference type="PROSITE" id="PS51279">
    <property type="entry name" value="BCNT_C"/>
    <property type="match status" value="1"/>
</dbReference>
<accession>Q60FC2</accession>
<accession>Q588U7</accession>
<accession>Q867A5</accession>